<sequence>MPTIQQLVRAQRKRIVKKTKSPALCACPQRRGVCTRVYTTTPKKPNSALRKVARVRLSSGFEVTAYIPGIGHNLQEHSVVLIRGGRVKDLPGVRYHIVRGTLDTAGVKERKQSRSKYGVKRVTKK</sequence>
<feature type="chain" id="PRO_0000146409" description="Small ribosomal subunit protein uS12c">
    <location>
        <begin position="1"/>
        <end position="125"/>
    </location>
</feature>
<reference key="1">
    <citation type="journal article" date="1999" name="Proc. Natl. Acad. Sci. U.S.A.">
        <title>The complete chloroplast DNA sequence of the green alga Nephroselmis olivacea: insights into the architecture of ancestral chloroplast genomes.</title>
        <authorList>
            <person name="Turmel M."/>
            <person name="Otis C."/>
            <person name="Lemieux C."/>
        </authorList>
    </citation>
    <scope>NUCLEOTIDE SEQUENCE [LARGE SCALE GENOMIC DNA]</scope>
    <source>
        <strain>NIES-484 / S-N-5-8</strain>
    </source>
</reference>
<evidence type="ECO:0000250" key="1"/>
<evidence type="ECO:0000305" key="2"/>
<comment type="function">
    <text evidence="1">With S4 and S5 plays an important role in translational accuracy. Located at the interface of the 30S and 50S subunits (By similarity).</text>
</comment>
<comment type="subunit">
    <text evidence="1">Part of the 30S ribosomal subunit.</text>
</comment>
<comment type="subcellular location">
    <subcellularLocation>
        <location>Plastid</location>
        <location>Chloroplast</location>
    </subcellularLocation>
</comment>
<comment type="similarity">
    <text evidence="2">Belongs to the universal ribosomal protein uS12 family.</text>
</comment>
<name>RR12_NEPOL</name>
<protein>
    <recommendedName>
        <fullName evidence="2">Small ribosomal subunit protein uS12c</fullName>
    </recommendedName>
    <alternativeName>
        <fullName>30S ribosomal protein S12, chloroplastic</fullName>
    </alternativeName>
</protein>
<accession>Q9TKZ7</accession>
<keyword id="KW-0150">Chloroplast</keyword>
<keyword id="KW-0934">Plastid</keyword>
<keyword id="KW-0687">Ribonucleoprotein</keyword>
<keyword id="KW-0689">Ribosomal protein</keyword>
<keyword id="KW-0694">RNA-binding</keyword>
<keyword id="KW-0699">rRNA-binding</keyword>
<organism>
    <name type="scientific">Nephroselmis olivacea</name>
    <name type="common">Green alga</name>
    <dbReference type="NCBI Taxonomy" id="31312"/>
    <lineage>
        <taxon>Eukaryota</taxon>
        <taxon>Viridiplantae</taxon>
        <taxon>Chlorophyta</taxon>
        <taxon>Nephroselmidophyceae</taxon>
        <taxon>Nephroselmidales</taxon>
        <taxon>Nephroselmidaceae</taxon>
        <taxon>Nephroselmis</taxon>
    </lineage>
</organism>
<gene>
    <name type="primary">rps12</name>
</gene>
<dbReference type="EMBL" id="AF137379">
    <property type="protein sequence ID" value="AAD54819.1"/>
    <property type="molecule type" value="Genomic_DNA"/>
</dbReference>
<dbReference type="RefSeq" id="NP_050848.1">
    <property type="nucleotide sequence ID" value="NC_000927.1"/>
</dbReference>
<dbReference type="SMR" id="Q9TKZ7"/>
<dbReference type="GeneID" id="802020"/>
<dbReference type="GO" id="GO:0009507">
    <property type="term" value="C:chloroplast"/>
    <property type="evidence" value="ECO:0007669"/>
    <property type="project" value="UniProtKB-SubCell"/>
</dbReference>
<dbReference type="GO" id="GO:0015935">
    <property type="term" value="C:small ribosomal subunit"/>
    <property type="evidence" value="ECO:0007669"/>
    <property type="project" value="InterPro"/>
</dbReference>
<dbReference type="GO" id="GO:0019843">
    <property type="term" value="F:rRNA binding"/>
    <property type="evidence" value="ECO:0007669"/>
    <property type="project" value="UniProtKB-UniRule"/>
</dbReference>
<dbReference type="GO" id="GO:0003735">
    <property type="term" value="F:structural constituent of ribosome"/>
    <property type="evidence" value="ECO:0007669"/>
    <property type="project" value="InterPro"/>
</dbReference>
<dbReference type="GO" id="GO:0006412">
    <property type="term" value="P:translation"/>
    <property type="evidence" value="ECO:0007669"/>
    <property type="project" value="UniProtKB-UniRule"/>
</dbReference>
<dbReference type="CDD" id="cd03368">
    <property type="entry name" value="Ribosomal_S12"/>
    <property type="match status" value="1"/>
</dbReference>
<dbReference type="FunFam" id="2.40.50.140:FF:000001">
    <property type="entry name" value="30S ribosomal protein S12"/>
    <property type="match status" value="1"/>
</dbReference>
<dbReference type="Gene3D" id="2.40.50.140">
    <property type="entry name" value="Nucleic acid-binding proteins"/>
    <property type="match status" value="1"/>
</dbReference>
<dbReference type="HAMAP" id="MF_00403_B">
    <property type="entry name" value="Ribosomal_uS12_B"/>
    <property type="match status" value="1"/>
</dbReference>
<dbReference type="InterPro" id="IPR012340">
    <property type="entry name" value="NA-bd_OB-fold"/>
</dbReference>
<dbReference type="InterPro" id="IPR006032">
    <property type="entry name" value="Ribosomal_uS12"/>
</dbReference>
<dbReference type="InterPro" id="IPR005679">
    <property type="entry name" value="Ribosomal_uS12_bac"/>
</dbReference>
<dbReference type="NCBIfam" id="TIGR00981">
    <property type="entry name" value="rpsL_bact"/>
    <property type="match status" value="1"/>
</dbReference>
<dbReference type="PANTHER" id="PTHR11652">
    <property type="entry name" value="30S RIBOSOMAL PROTEIN S12 FAMILY MEMBER"/>
    <property type="match status" value="1"/>
</dbReference>
<dbReference type="Pfam" id="PF00164">
    <property type="entry name" value="Ribosom_S12_S23"/>
    <property type="match status" value="1"/>
</dbReference>
<dbReference type="PIRSF" id="PIRSF002133">
    <property type="entry name" value="Ribosomal_S12/S23"/>
    <property type="match status" value="1"/>
</dbReference>
<dbReference type="PRINTS" id="PR01034">
    <property type="entry name" value="RIBOSOMALS12"/>
</dbReference>
<dbReference type="SUPFAM" id="SSF50249">
    <property type="entry name" value="Nucleic acid-binding proteins"/>
    <property type="match status" value="1"/>
</dbReference>
<dbReference type="PROSITE" id="PS00055">
    <property type="entry name" value="RIBOSOMAL_S12"/>
    <property type="match status" value="1"/>
</dbReference>
<proteinExistence type="inferred from homology"/>
<geneLocation type="chloroplast"/>